<organism>
    <name type="scientific">Ruthia magnifica subsp. Calyptogena magnifica</name>
    <dbReference type="NCBI Taxonomy" id="413404"/>
    <lineage>
        <taxon>Bacteria</taxon>
        <taxon>Pseudomonadati</taxon>
        <taxon>Pseudomonadota</taxon>
        <taxon>Gammaproteobacteria</taxon>
        <taxon>Candidatus Pseudothioglobaceae</taxon>
        <taxon>Candidatus Ruthturnera</taxon>
    </lineage>
</organism>
<name>Y394_RUTMC</name>
<feature type="chain" id="PRO_1000045370" description="Probable transcriptional regulatory protein Rmag_0394">
    <location>
        <begin position="1"/>
        <end position="246"/>
    </location>
</feature>
<accession>A1AW54</accession>
<proteinExistence type="inferred from homology"/>
<gene>
    <name type="ordered locus">Rmag_0394</name>
</gene>
<sequence length="246" mass="27536">MAGHSKWHNIQHRKGAQDAKRGKIFTKLIKEIVISAKIGGGRIENNHSLKIIIDKALAVNMRRNTIENAVKRGNGDFDGNNYEKIRYEGYSLGGTAIMVDCLSDNRNRTISDIRHAFLKHGGNLGRDGSVSYLFTKQGFISFDTGNENQIMEIALDEGAQDIITNDDDSIDVITTPEDFFTIKDVLTTSGLEPSHAEVTMEPASRVELNLSDAEKFMKLIDHLEDLDETKKIYHNADISDKVMVRL</sequence>
<comment type="subcellular location">
    <subcellularLocation>
        <location evidence="1">Cytoplasm</location>
    </subcellularLocation>
</comment>
<comment type="similarity">
    <text evidence="1">Belongs to the TACO1 family.</text>
</comment>
<keyword id="KW-0963">Cytoplasm</keyword>
<keyword id="KW-0238">DNA-binding</keyword>
<keyword id="KW-0804">Transcription</keyword>
<keyword id="KW-0805">Transcription regulation</keyword>
<protein>
    <recommendedName>
        <fullName evidence="1">Probable transcriptional regulatory protein Rmag_0394</fullName>
    </recommendedName>
</protein>
<dbReference type="EMBL" id="CP000488">
    <property type="protein sequence ID" value="ABL02161.1"/>
    <property type="molecule type" value="Genomic_DNA"/>
</dbReference>
<dbReference type="RefSeq" id="WP_011737786.1">
    <property type="nucleotide sequence ID" value="NC_008610.1"/>
</dbReference>
<dbReference type="SMR" id="A1AW54"/>
<dbReference type="STRING" id="413404.Rmag_0394"/>
<dbReference type="KEGG" id="rma:Rmag_0394"/>
<dbReference type="eggNOG" id="COG0217">
    <property type="taxonomic scope" value="Bacteria"/>
</dbReference>
<dbReference type="HOGENOM" id="CLU_062974_2_2_6"/>
<dbReference type="OrthoDB" id="9781053at2"/>
<dbReference type="Proteomes" id="UP000002587">
    <property type="component" value="Chromosome"/>
</dbReference>
<dbReference type="GO" id="GO:0005829">
    <property type="term" value="C:cytosol"/>
    <property type="evidence" value="ECO:0007669"/>
    <property type="project" value="TreeGrafter"/>
</dbReference>
<dbReference type="GO" id="GO:0003677">
    <property type="term" value="F:DNA binding"/>
    <property type="evidence" value="ECO:0007669"/>
    <property type="project" value="UniProtKB-UniRule"/>
</dbReference>
<dbReference type="GO" id="GO:0006355">
    <property type="term" value="P:regulation of DNA-templated transcription"/>
    <property type="evidence" value="ECO:0007669"/>
    <property type="project" value="UniProtKB-UniRule"/>
</dbReference>
<dbReference type="FunFam" id="1.10.10.200:FF:000002">
    <property type="entry name" value="Probable transcriptional regulatory protein CLM62_37755"/>
    <property type="match status" value="1"/>
</dbReference>
<dbReference type="FunFam" id="3.30.70.980:FF:000002">
    <property type="entry name" value="Probable transcriptional regulatory protein YebC"/>
    <property type="match status" value="1"/>
</dbReference>
<dbReference type="Gene3D" id="1.10.10.200">
    <property type="match status" value="1"/>
</dbReference>
<dbReference type="Gene3D" id="3.30.70.980">
    <property type="match status" value="2"/>
</dbReference>
<dbReference type="HAMAP" id="MF_00693">
    <property type="entry name" value="Transcrip_reg_TACO1"/>
    <property type="match status" value="1"/>
</dbReference>
<dbReference type="InterPro" id="IPR017856">
    <property type="entry name" value="Integrase-like_N"/>
</dbReference>
<dbReference type="InterPro" id="IPR048300">
    <property type="entry name" value="TACO1_YebC-like_2nd/3rd_dom"/>
</dbReference>
<dbReference type="InterPro" id="IPR049083">
    <property type="entry name" value="TACO1_YebC_N"/>
</dbReference>
<dbReference type="InterPro" id="IPR002876">
    <property type="entry name" value="Transcrip_reg_TACO1-like"/>
</dbReference>
<dbReference type="InterPro" id="IPR026564">
    <property type="entry name" value="Transcrip_reg_TACO1-like_dom3"/>
</dbReference>
<dbReference type="InterPro" id="IPR029072">
    <property type="entry name" value="YebC-like"/>
</dbReference>
<dbReference type="NCBIfam" id="NF001030">
    <property type="entry name" value="PRK00110.1"/>
    <property type="match status" value="1"/>
</dbReference>
<dbReference type="NCBIfam" id="NF009044">
    <property type="entry name" value="PRK12378.1"/>
    <property type="match status" value="1"/>
</dbReference>
<dbReference type="NCBIfam" id="TIGR01033">
    <property type="entry name" value="YebC/PmpR family DNA-binding transcriptional regulator"/>
    <property type="match status" value="1"/>
</dbReference>
<dbReference type="PANTHER" id="PTHR12532:SF6">
    <property type="entry name" value="TRANSCRIPTIONAL REGULATORY PROTEIN YEBC-RELATED"/>
    <property type="match status" value="1"/>
</dbReference>
<dbReference type="PANTHER" id="PTHR12532">
    <property type="entry name" value="TRANSLATIONAL ACTIVATOR OF CYTOCHROME C OXIDASE 1"/>
    <property type="match status" value="1"/>
</dbReference>
<dbReference type="Pfam" id="PF20772">
    <property type="entry name" value="TACO1_YebC_N"/>
    <property type="match status" value="1"/>
</dbReference>
<dbReference type="Pfam" id="PF01709">
    <property type="entry name" value="Transcrip_reg"/>
    <property type="match status" value="1"/>
</dbReference>
<dbReference type="SUPFAM" id="SSF75625">
    <property type="entry name" value="YebC-like"/>
    <property type="match status" value="1"/>
</dbReference>
<evidence type="ECO:0000255" key="1">
    <source>
        <dbReference type="HAMAP-Rule" id="MF_00693"/>
    </source>
</evidence>
<reference key="1">
    <citation type="journal article" date="2007" name="Science">
        <title>The Calyptogena magnifica chemoautotrophic symbiont genome.</title>
        <authorList>
            <person name="Newton I.L.G."/>
            <person name="Woyke T."/>
            <person name="Auchtung T.A."/>
            <person name="Dilly G.F."/>
            <person name="Dutton R.J."/>
            <person name="Fisher M.C."/>
            <person name="Fontanez K.M."/>
            <person name="Lau E."/>
            <person name="Stewart F.J."/>
            <person name="Richardson P.M."/>
            <person name="Barry K.W."/>
            <person name="Saunders E."/>
            <person name="Detter J.C."/>
            <person name="Wu D."/>
            <person name="Eisen J.A."/>
            <person name="Cavanaugh C.M."/>
        </authorList>
    </citation>
    <scope>NUCLEOTIDE SEQUENCE [LARGE SCALE GENOMIC DNA]</scope>
</reference>